<gene>
    <name evidence="1" type="primary">pdxH</name>
    <name type="ordered locus">Npun_F6283</name>
</gene>
<dbReference type="EC" id="1.4.3.5" evidence="1"/>
<dbReference type="EMBL" id="CP001037">
    <property type="protein sequence ID" value="ACC84562.1"/>
    <property type="molecule type" value="Genomic_DNA"/>
</dbReference>
<dbReference type="RefSeq" id="WP_012412501.1">
    <property type="nucleotide sequence ID" value="NC_010628.1"/>
</dbReference>
<dbReference type="SMR" id="B2IX27"/>
<dbReference type="STRING" id="63737.Npun_F6283"/>
<dbReference type="EnsemblBacteria" id="ACC84562">
    <property type="protein sequence ID" value="ACC84562"/>
    <property type="gene ID" value="Npun_F6283"/>
</dbReference>
<dbReference type="KEGG" id="npu:Npun_F6283"/>
<dbReference type="eggNOG" id="COG0259">
    <property type="taxonomic scope" value="Bacteria"/>
</dbReference>
<dbReference type="HOGENOM" id="CLU_032263_2_2_3"/>
<dbReference type="OrthoDB" id="9780392at2"/>
<dbReference type="PhylomeDB" id="B2IX27"/>
<dbReference type="UniPathway" id="UPA01068">
    <property type="reaction ID" value="UER00304"/>
</dbReference>
<dbReference type="UniPathway" id="UPA01068">
    <property type="reaction ID" value="UER00305"/>
</dbReference>
<dbReference type="Proteomes" id="UP000001191">
    <property type="component" value="Chromosome"/>
</dbReference>
<dbReference type="GO" id="GO:0010181">
    <property type="term" value="F:FMN binding"/>
    <property type="evidence" value="ECO:0007669"/>
    <property type="project" value="UniProtKB-UniRule"/>
</dbReference>
<dbReference type="GO" id="GO:0004733">
    <property type="term" value="F:pyridoxamine phosphate oxidase activity"/>
    <property type="evidence" value="ECO:0007669"/>
    <property type="project" value="UniProtKB-UniRule"/>
</dbReference>
<dbReference type="GO" id="GO:0008615">
    <property type="term" value="P:pyridoxine biosynthetic process"/>
    <property type="evidence" value="ECO:0007669"/>
    <property type="project" value="UniProtKB-KW"/>
</dbReference>
<dbReference type="FunFam" id="2.30.110.10:FF:000005">
    <property type="entry name" value="NAD(P)H-hydrate epimerase"/>
    <property type="match status" value="1"/>
</dbReference>
<dbReference type="Gene3D" id="2.30.110.10">
    <property type="entry name" value="Electron Transport, Fmn-binding Protein, Chain A"/>
    <property type="match status" value="1"/>
</dbReference>
<dbReference type="HAMAP" id="MF_01629">
    <property type="entry name" value="PdxH"/>
    <property type="match status" value="1"/>
</dbReference>
<dbReference type="InterPro" id="IPR000659">
    <property type="entry name" value="Pyridox_Oxase"/>
</dbReference>
<dbReference type="InterPro" id="IPR019740">
    <property type="entry name" value="Pyridox_Oxase_CS"/>
</dbReference>
<dbReference type="InterPro" id="IPR011576">
    <property type="entry name" value="Pyridox_Oxase_N"/>
</dbReference>
<dbReference type="InterPro" id="IPR019576">
    <property type="entry name" value="Pyridoxamine_oxidase_dimer_C"/>
</dbReference>
<dbReference type="InterPro" id="IPR012349">
    <property type="entry name" value="Split_barrel_FMN-bd"/>
</dbReference>
<dbReference type="NCBIfam" id="TIGR00558">
    <property type="entry name" value="pdxH"/>
    <property type="match status" value="1"/>
</dbReference>
<dbReference type="NCBIfam" id="NF004231">
    <property type="entry name" value="PRK05679.1"/>
    <property type="match status" value="1"/>
</dbReference>
<dbReference type="PANTHER" id="PTHR10851:SF0">
    <property type="entry name" value="PYRIDOXINE-5'-PHOSPHATE OXIDASE"/>
    <property type="match status" value="1"/>
</dbReference>
<dbReference type="PANTHER" id="PTHR10851">
    <property type="entry name" value="PYRIDOXINE-5-PHOSPHATE OXIDASE"/>
    <property type="match status" value="1"/>
</dbReference>
<dbReference type="Pfam" id="PF10590">
    <property type="entry name" value="PNP_phzG_C"/>
    <property type="match status" value="1"/>
</dbReference>
<dbReference type="Pfam" id="PF01243">
    <property type="entry name" value="PNPOx_N"/>
    <property type="match status" value="1"/>
</dbReference>
<dbReference type="PIRSF" id="PIRSF000190">
    <property type="entry name" value="Pyd_amn-ph_oxd"/>
    <property type="match status" value="1"/>
</dbReference>
<dbReference type="SUPFAM" id="SSF50475">
    <property type="entry name" value="FMN-binding split barrel"/>
    <property type="match status" value="1"/>
</dbReference>
<dbReference type="PROSITE" id="PS01064">
    <property type="entry name" value="PYRIDOX_OXIDASE"/>
    <property type="match status" value="1"/>
</dbReference>
<reference key="1">
    <citation type="journal article" date="2013" name="Plant Physiol.">
        <title>A Nostoc punctiforme Sugar Transporter Necessary to Establish a Cyanobacterium-Plant Symbiosis.</title>
        <authorList>
            <person name="Ekman M."/>
            <person name="Picossi S."/>
            <person name="Campbell E.L."/>
            <person name="Meeks J.C."/>
            <person name="Flores E."/>
        </authorList>
    </citation>
    <scope>NUCLEOTIDE SEQUENCE [LARGE SCALE GENOMIC DNA]</scope>
    <source>
        <strain>ATCC 29133 / PCC 73102</strain>
    </source>
</reference>
<evidence type="ECO:0000255" key="1">
    <source>
        <dbReference type="HAMAP-Rule" id="MF_01629"/>
    </source>
</evidence>
<keyword id="KW-0285">Flavoprotein</keyword>
<keyword id="KW-0288">FMN</keyword>
<keyword id="KW-0560">Oxidoreductase</keyword>
<keyword id="KW-0664">Pyridoxine biosynthesis</keyword>
<keyword id="KW-1185">Reference proteome</keyword>
<name>PDXH_NOSP7</name>
<sequence>MDKTVADLRKDYTLEGLSELEVDLNPFIQFKKWFDQALAGQLPEPNAMTLATVTPDGKPSARMVLLKDFDERGFAFFTNYNSRKGQELAENPLAALVFWWAELERQVRICGYVEKVSETESDQYFDTRPPNSRLGAWVSNQSEVIESREVLERRMQEFYSKYENQEIPRPPHWGGLRVIPTEIEFWQGRSSRLHDRLLYSRLDNGTWKIDRLSP</sequence>
<feature type="chain" id="PRO_1000186322" description="Pyridoxine/pyridoxamine 5'-phosphate oxidase">
    <location>
        <begin position="1"/>
        <end position="214"/>
    </location>
</feature>
<feature type="binding site" evidence="1">
    <location>
        <begin position="9"/>
        <end position="12"/>
    </location>
    <ligand>
        <name>substrate</name>
    </ligand>
</feature>
<feature type="binding site" evidence="1">
    <location>
        <begin position="62"/>
        <end position="67"/>
    </location>
    <ligand>
        <name>FMN</name>
        <dbReference type="ChEBI" id="CHEBI:58210"/>
    </ligand>
</feature>
<feature type="binding site" evidence="1">
    <location>
        <position position="67"/>
    </location>
    <ligand>
        <name>substrate</name>
    </ligand>
</feature>
<feature type="binding site" evidence="1">
    <location>
        <begin position="77"/>
        <end position="78"/>
    </location>
    <ligand>
        <name>FMN</name>
        <dbReference type="ChEBI" id="CHEBI:58210"/>
    </ligand>
</feature>
<feature type="binding site" evidence="1">
    <location>
        <position position="83"/>
    </location>
    <ligand>
        <name>FMN</name>
        <dbReference type="ChEBI" id="CHEBI:58210"/>
    </ligand>
</feature>
<feature type="binding site" evidence="1">
    <location>
        <position position="84"/>
    </location>
    <ligand>
        <name>FMN</name>
        <dbReference type="ChEBI" id="CHEBI:58210"/>
    </ligand>
</feature>
<feature type="binding site" evidence="1">
    <location>
        <position position="106"/>
    </location>
    <ligand>
        <name>FMN</name>
        <dbReference type="ChEBI" id="CHEBI:58210"/>
    </ligand>
</feature>
<feature type="binding site" evidence="1">
    <location>
        <position position="124"/>
    </location>
    <ligand>
        <name>substrate</name>
    </ligand>
</feature>
<feature type="binding site" evidence="1">
    <location>
        <position position="128"/>
    </location>
    <ligand>
        <name>substrate</name>
    </ligand>
</feature>
<feature type="binding site" evidence="1">
    <location>
        <position position="132"/>
    </location>
    <ligand>
        <name>substrate</name>
    </ligand>
</feature>
<feature type="binding site" evidence="1">
    <location>
        <begin position="141"/>
        <end position="142"/>
    </location>
    <ligand>
        <name>FMN</name>
        <dbReference type="ChEBI" id="CHEBI:58210"/>
    </ligand>
</feature>
<feature type="binding site" evidence="1">
    <location>
        <position position="186"/>
    </location>
    <ligand>
        <name>FMN</name>
        <dbReference type="ChEBI" id="CHEBI:58210"/>
    </ligand>
</feature>
<feature type="binding site" evidence="1">
    <location>
        <begin position="192"/>
        <end position="194"/>
    </location>
    <ligand>
        <name>substrate</name>
    </ligand>
</feature>
<feature type="binding site" evidence="1">
    <location>
        <position position="196"/>
    </location>
    <ligand>
        <name>FMN</name>
        <dbReference type="ChEBI" id="CHEBI:58210"/>
    </ligand>
</feature>
<proteinExistence type="inferred from homology"/>
<comment type="function">
    <text evidence="1">Catalyzes the oxidation of either pyridoxine 5'-phosphate (PNP) or pyridoxamine 5'-phosphate (PMP) into pyridoxal 5'-phosphate (PLP).</text>
</comment>
<comment type="catalytic activity">
    <reaction evidence="1">
        <text>pyridoxamine 5'-phosphate + O2 + H2O = pyridoxal 5'-phosphate + H2O2 + NH4(+)</text>
        <dbReference type="Rhea" id="RHEA:15817"/>
        <dbReference type="ChEBI" id="CHEBI:15377"/>
        <dbReference type="ChEBI" id="CHEBI:15379"/>
        <dbReference type="ChEBI" id="CHEBI:16240"/>
        <dbReference type="ChEBI" id="CHEBI:28938"/>
        <dbReference type="ChEBI" id="CHEBI:58451"/>
        <dbReference type="ChEBI" id="CHEBI:597326"/>
        <dbReference type="EC" id="1.4.3.5"/>
    </reaction>
</comment>
<comment type="catalytic activity">
    <reaction evidence="1">
        <text>pyridoxine 5'-phosphate + O2 = pyridoxal 5'-phosphate + H2O2</text>
        <dbReference type="Rhea" id="RHEA:15149"/>
        <dbReference type="ChEBI" id="CHEBI:15379"/>
        <dbReference type="ChEBI" id="CHEBI:16240"/>
        <dbReference type="ChEBI" id="CHEBI:58589"/>
        <dbReference type="ChEBI" id="CHEBI:597326"/>
        <dbReference type="EC" id="1.4.3.5"/>
    </reaction>
</comment>
<comment type="cofactor">
    <cofactor evidence="1">
        <name>FMN</name>
        <dbReference type="ChEBI" id="CHEBI:58210"/>
    </cofactor>
    <text evidence="1">Binds 1 FMN per subunit.</text>
</comment>
<comment type="pathway">
    <text evidence="1">Cofactor metabolism; pyridoxal 5'-phosphate salvage; pyridoxal 5'-phosphate from pyridoxamine 5'-phosphate: step 1/1.</text>
</comment>
<comment type="pathway">
    <text evidence="1">Cofactor metabolism; pyridoxal 5'-phosphate salvage; pyridoxal 5'-phosphate from pyridoxine 5'-phosphate: step 1/1.</text>
</comment>
<comment type="subunit">
    <text evidence="1">Homodimer.</text>
</comment>
<comment type="similarity">
    <text evidence="1">Belongs to the pyridoxamine 5'-phosphate oxidase family.</text>
</comment>
<organism>
    <name type="scientific">Nostoc punctiforme (strain ATCC 29133 / PCC 73102)</name>
    <dbReference type="NCBI Taxonomy" id="63737"/>
    <lineage>
        <taxon>Bacteria</taxon>
        <taxon>Bacillati</taxon>
        <taxon>Cyanobacteriota</taxon>
        <taxon>Cyanophyceae</taxon>
        <taxon>Nostocales</taxon>
        <taxon>Nostocaceae</taxon>
        <taxon>Nostoc</taxon>
    </lineage>
</organism>
<accession>B2IX27</accession>
<protein>
    <recommendedName>
        <fullName evidence="1">Pyridoxine/pyridoxamine 5'-phosphate oxidase</fullName>
        <ecNumber evidence="1">1.4.3.5</ecNumber>
    </recommendedName>
    <alternativeName>
        <fullName evidence="1">PNP/PMP oxidase</fullName>
        <shortName evidence="1">PNPOx</shortName>
    </alternativeName>
    <alternativeName>
        <fullName evidence="1">Pyridoxal 5'-phosphate synthase</fullName>
    </alternativeName>
</protein>